<proteinExistence type="inferred from homology"/>
<accession>B1JJ21</accession>
<gene>
    <name evidence="1" type="primary">pheS</name>
    <name type="ordered locus">YPK_1824</name>
</gene>
<organism>
    <name type="scientific">Yersinia pseudotuberculosis serotype O:3 (strain YPIII)</name>
    <dbReference type="NCBI Taxonomy" id="502800"/>
    <lineage>
        <taxon>Bacteria</taxon>
        <taxon>Pseudomonadati</taxon>
        <taxon>Pseudomonadota</taxon>
        <taxon>Gammaproteobacteria</taxon>
        <taxon>Enterobacterales</taxon>
        <taxon>Yersiniaceae</taxon>
        <taxon>Yersinia</taxon>
    </lineage>
</organism>
<feature type="chain" id="PRO_1000114934" description="Phenylalanine--tRNA ligase alpha subunit">
    <location>
        <begin position="1"/>
        <end position="327"/>
    </location>
</feature>
<feature type="binding site" evidence="1">
    <location>
        <position position="252"/>
    </location>
    <ligand>
        <name>Mg(2+)</name>
        <dbReference type="ChEBI" id="CHEBI:18420"/>
        <note>shared with beta subunit</note>
    </ligand>
</feature>
<name>SYFA_YERPY</name>
<reference key="1">
    <citation type="submission" date="2008-02" db="EMBL/GenBank/DDBJ databases">
        <title>Complete sequence of Yersinia pseudotuberculosis YPIII.</title>
        <authorList>
            <consortium name="US DOE Joint Genome Institute"/>
            <person name="Copeland A."/>
            <person name="Lucas S."/>
            <person name="Lapidus A."/>
            <person name="Glavina del Rio T."/>
            <person name="Dalin E."/>
            <person name="Tice H."/>
            <person name="Bruce D."/>
            <person name="Goodwin L."/>
            <person name="Pitluck S."/>
            <person name="Munk A.C."/>
            <person name="Brettin T."/>
            <person name="Detter J.C."/>
            <person name="Han C."/>
            <person name="Tapia R."/>
            <person name="Schmutz J."/>
            <person name="Larimer F."/>
            <person name="Land M."/>
            <person name="Hauser L."/>
            <person name="Challacombe J.F."/>
            <person name="Green L."/>
            <person name="Lindler L.E."/>
            <person name="Nikolich M.P."/>
            <person name="Richardson P."/>
        </authorList>
    </citation>
    <scope>NUCLEOTIDE SEQUENCE [LARGE SCALE GENOMIC DNA]</scope>
    <source>
        <strain>YPIII</strain>
    </source>
</reference>
<sequence>MPHLAELVAKAKAAVEDAQDIAALDLVRVEYLGKKGHLTLQMTSLRELPAEERPAAGAVINQAKQEVQEALNARKEKLESAVLNARLAAETIDVSLPGRRMENGGLHPVTRTIERIETFFGELGFSVESGPEIEDDYHNFDALNIPAHHPARADHDTFWFDATRLLRTQTSGVQIRTMQEQQPPIRIIVPGRVYRNDYDQTHTPMFHQMEGLIVDRDISFTNLKGTLHDFLRNFFEEDLQIRFRPSYFPFTEPSAEVDVMGKNGKWLEVLGCGMVHPNVLRNVGIDPEIYSGFAFGMGMERLTMLRYGVTDLRAFFENDLRFLKQFK</sequence>
<comment type="catalytic activity">
    <reaction evidence="1">
        <text>tRNA(Phe) + L-phenylalanine + ATP = L-phenylalanyl-tRNA(Phe) + AMP + diphosphate + H(+)</text>
        <dbReference type="Rhea" id="RHEA:19413"/>
        <dbReference type="Rhea" id="RHEA-COMP:9668"/>
        <dbReference type="Rhea" id="RHEA-COMP:9699"/>
        <dbReference type="ChEBI" id="CHEBI:15378"/>
        <dbReference type="ChEBI" id="CHEBI:30616"/>
        <dbReference type="ChEBI" id="CHEBI:33019"/>
        <dbReference type="ChEBI" id="CHEBI:58095"/>
        <dbReference type="ChEBI" id="CHEBI:78442"/>
        <dbReference type="ChEBI" id="CHEBI:78531"/>
        <dbReference type="ChEBI" id="CHEBI:456215"/>
        <dbReference type="EC" id="6.1.1.20"/>
    </reaction>
</comment>
<comment type="cofactor">
    <cofactor evidence="1">
        <name>Mg(2+)</name>
        <dbReference type="ChEBI" id="CHEBI:18420"/>
    </cofactor>
    <text evidence="1">Binds 2 magnesium ions per tetramer.</text>
</comment>
<comment type="subunit">
    <text evidence="1">Tetramer of two alpha and two beta subunits.</text>
</comment>
<comment type="subcellular location">
    <subcellularLocation>
        <location evidence="1">Cytoplasm</location>
    </subcellularLocation>
</comment>
<comment type="similarity">
    <text evidence="1">Belongs to the class-II aminoacyl-tRNA synthetase family. Phe-tRNA synthetase alpha subunit type 1 subfamily.</text>
</comment>
<keyword id="KW-0030">Aminoacyl-tRNA synthetase</keyword>
<keyword id="KW-0067">ATP-binding</keyword>
<keyword id="KW-0963">Cytoplasm</keyword>
<keyword id="KW-0436">Ligase</keyword>
<keyword id="KW-0460">Magnesium</keyword>
<keyword id="KW-0479">Metal-binding</keyword>
<keyword id="KW-0547">Nucleotide-binding</keyword>
<keyword id="KW-0648">Protein biosynthesis</keyword>
<evidence type="ECO:0000255" key="1">
    <source>
        <dbReference type="HAMAP-Rule" id="MF_00281"/>
    </source>
</evidence>
<dbReference type="EC" id="6.1.1.20" evidence="1"/>
<dbReference type="EMBL" id="CP000950">
    <property type="protein sequence ID" value="ACA68115.1"/>
    <property type="molecule type" value="Genomic_DNA"/>
</dbReference>
<dbReference type="RefSeq" id="WP_011192546.1">
    <property type="nucleotide sequence ID" value="NZ_CP009792.1"/>
</dbReference>
<dbReference type="SMR" id="B1JJ21"/>
<dbReference type="GeneID" id="49785658"/>
<dbReference type="KEGG" id="ypy:YPK_1824"/>
<dbReference type="PATRIC" id="fig|502800.11.peg.2493"/>
<dbReference type="GO" id="GO:0005737">
    <property type="term" value="C:cytoplasm"/>
    <property type="evidence" value="ECO:0007669"/>
    <property type="project" value="UniProtKB-SubCell"/>
</dbReference>
<dbReference type="GO" id="GO:0005524">
    <property type="term" value="F:ATP binding"/>
    <property type="evidence" value="ECO:0007669"/>
    <property type="project" value="UniProtKB-UniRule"/>
</dbReference>
<dbReference type="GO" id="GO:0000287">
    <property type="term" value="F:magnesium ion binding"/>
    <property type="evidence" value="ECO:0007669"/>
    <property type="project" value="UniProtKB-UniRule"/>
</dbReference>
<dbReference type="GO" id="GO:0004826">
    <property type="term" value="F:phenylalanine-tRNA ligase activity"/>
    <property type="evidence" value="ECO:0007669"/>
    <property type="project" value="UniProtKB-UniRule"/>
</dbReference>
<dbReference type="GO" id="GO:0000049">
    <property type="term" value="F:tRNA binding"/>
    <property type="evidence" value="ECO:0007669"/>
    <property type="project" value="InterPro"/>
</dbReference>
<dbReference type="GO" id="GO:0006432">
    <property type="term" value="P:phenylalanyl-tRNA aminoacylation"/>
    <property type="evidence" value="ECO:0007669"/>
    <property type="project" value="UniProtKB-UniRule"/>
</dbReference>
<dbReference type="CDD" id="cd00496">
    <property type="entry name" value="PheRS_alpha_core"/>
    <property type="match status" value="1"/>
</dbReference>
<dbReference type="FunFam" id="3.30.930.10:FF:000003">
    <property type="entry name" value="Phenylalanine--tRNA ligase alpha subunit"/>
    <property type="match status" value="1"/>
</dbReference>
<dbReference type="Gene3D" id="3.30.930.10">
    <property type="entry name" value="Bira Bifunctional Protein, Domain 2"/>
    <property type="match status" value="1"/>
</dbReference>
<dbReference type="HAMAP" id="MF_00281">
    <property type="entry name" value="Phe_tRNA_synth_alpha1"/>
    <property type="match status" value="1"/>
</dbReference>
<dbReference type="InterPro" id="IPR006195">
    <property type="entry name" value="aa-tRNA-synth_II"/>
</dbReference>
<dbReference type="InterPro" id="IPR045864">
    <property type="entry name" value="aa-tRNA-synth_II/BPL/LPL"/>
</dbReference>
<dbReference type="InterPro" id="IPR004529">
    <property type="entry name" value="Phe-tRNA-synth_IIc_asu"/>
</dbReference>
<dbReference type="InterPro" id="IPR004188">
    <property type="entry name" value="Phe-tRNA_ligase_II_N"/>
</dbReference>
<dbReference type="InterPro" id="IPR022911">
    <property type="entry name" value="Phe_tRNA_ligase_alpha1_bac"/>
</dbReference>
<dbReference type="InterPro" id="IPR002319">
    <property type="entry name" value="Phenylalanyl-tRNA_Synthase"/>
</dbReference>
<dbReference type="InterPro" id="IPR010978">
    <property type="entry name" value="tRNA-bd_arm"/>
</dbReference>
<dbReference type="NCBIfam" id="TIGR00468">
    <property type="entry name" value="pheS"/>
    <property type="match status" value="1"/>
</dbReference>
<dbReference type="PANTHER" id="PTHR11538:SF41">
    <property type="entry name" value="PHENYLALANINE--TRNA LIGASE, MITOCHONDRIAL"/>
    <property type="match status" value="1"/>
</dbReference>
<dbReference type="PANTHER" id="PTHR11538">
    <property type="entry name" value="PHENYLALANYL-TRNA SYNTHETASE"/>
    <property type="match status" value="1"/>
</dbReference>
<dbReference type="Pfam" id="PF02912">
    <property type="entry name" value="Phe_tRNA-synt_N"/>
    <property type="match status" value="1"/>
</dbReference>
<dbReference type="Pfam" id="PF01409">
    <property type="entry name" value="tRNA-synt_2d"/>
    <property type="match status" value="1"/>
</dbReference>
<dbReference type="SUPFAM" id="SSF55681">
    <property type="entry name" value="Class II aaRS and biotin synthetases"/>
    <property type="match status" value="1"/>
</dbReference>
<dbReference type="SUPFAM" id="SSF46589">
    <property type="entry name" value="tRNA-binding arm"/>
    <property type="match status" value="1"/>
</dbReference>
<dbReference type="PROSITE" id="PS50862">
    <property type="entry name" value="AA_TRNA_LIGASE_II"/>
    <property type="match status" value="1"/>
</dbReference>
<protein>
    <recommendedName>
        <fullName evidence="1">Phenylalanine--tRNA ligase alpha subunit</fullName>
        <ecNumber evidence="1">6.1.1.20</ecNumber>
    </recommendedName>
    <alternativeName>
        <fullName evidence="1">Phenylalanyl-tRNA synthetase alpha subunit</fullName>
        <shortName evidence="1">PheRS</shortName>
    </alternativeName>
</protein>